<feature type="chain" id="PRO_0000296479" description="Large ribosomal subunit protein bL32">
    <location>
        <begin position="1"/>
        <end position="60"/>
    </location>
</feature>
<feature type="region of interest" description="Disordered" evidence="2">
    <location>
        <begin position="1"/>
        <end position="60"/>
    </location>
</feature>
<feature type="compositionally biased region" description="Basic residues" evidence="2">
    <location>
        <begin position="49"/>
        <end position="60"/>
    </location>
</feature>
<comment type="similarity">
    <text evidence="1">Belongs to the bacterial ribosomal protein bL32 family.</text>
</comment>
<evidence type="ECO:0000255" key="1">
    <source>
        <dbReference type="HAMAP-Rule" id="MF_00340"/>
    </source>
</evidence>
<evidence type="ECO:0000256" key="2">
    <source>
        <dbReference type="SAM" id="MobiDB-lite"/>
    </source>
</evidence>
<evidence type="ECO:0000305" key="3"/>
<organism>
    <name type="scientific">Herminiimonas arsenicoxydans</name>
    <dbReference type="NCBI Taxonomy" id="204773"/>
    <lineage>
        <taxon>Bacteria</taxon>
        <taxon>Pseudomonadati</taxon>
        <taxon>Pseudomonadota</taxon>
        <taxon>Betaproteobacteria</taxon>
        <taxon>Burkholderiales</taxon>
        <taxon>Oxalobacteraceae</taxon>
        <taxon>Herminiimonas</taxon>
    </lineage>
</organism>
<dbReference type="EMBL" id="CU207211">
    <property type="protein sequence ID" value="CAL62221.1"/>
    <property type="molecule type" value="Genomic_DNA"/>
</dbReference>
<dbReference type="SMR" id="A4G6T4"/>
<dbReference type="STRING" id="204773.HEAR2079"/>
<dbReference type="KEGG" id="har:HEAR2079"/>
<dbReference type="eggNOG" id="COG0333">
    <property type="taxonomic scope" value="Bacteria"/>
</dbReference>
<dbReference type="HOGENOM" id="CLU_129084_2_1_4"/>
<dbReference type="OrthoDB" id="9801927at2"/>
<dbReference type="Proteomes" id="UP000006697">
    <property type="component" value="Chromosome"/>
</dbReference>
<dbReference type="GO" id="GO:0015934">
    <property type="term" value="C:large ribosomal subunit"/>
    <property type="evidence" value="ECO:0007669"/>
    <property type="project" value="InterPro"/>
</dbReference>
<dbReference type="GO" id="GO:0003735">
    <property type="term" value="F:structural constituent of ribosome"/>
    <property type="evidence" value="ECO:0007669"/>
    <property type="project" value="InterPro"/>
</dbReference>
<dbReference type="GO" id="GO:0006412">
    <property type="term" value="P:translation"/>
    <property type="evidence" value="ECO:0007669"/>
    <property type="project" value="UniProtKB-UniRule"/>
</dbReference>
<dbReference type="HAMAP" id="MF_00340">
    <property type="entry name" value="Ribosomal_bL32"/>
    <property type="match status" value="1"/>
</dbReference>
<dbReference type="InterPro" id="IPR002677">
    <property type="entry name" value="Ribosomal_bL32"/>
</dbReference>
<dbReference type="InterPro" id="IPR044957">
    <property type="entry name" value="Ribosomal_bL32_bact"/>
</dbReference>
<dbReference type="InterPro" id="IPR011332">
    <property type="entry name" value="Ribosomal_zn-bd"/>
</dbReference>
<dbReference type="NCBIfam" id="TIGR01031">
    <property type="entry name" value="rpmF_bact"/>
    <property type="match status" value="1"/>
</dbReference>
<dbReference type="PANTHER" id="PTHR35534">
    <property type="entry name" value="50S RIBOSOMAL PROTEIN L32"/>
    <property type="match status" value="1"/>
</dbReference>
<dbReference type="PANTHER" id="PTHR35534:SF1">
    <property type="entry name" value="LARGE RIBOSOMAL SUBUNIT PROTEIN BL32"/>
    <property type="match status" value="1"/>
</dbReference>
<dbReference type="Pfam" id="PF01783">
    <property type="entry name" value="Ribosomal_L32p"/>
    <property type="match status" value="1"/>
</dbReference>
<dbReference type="SUPFAM" id="SSF57829">
    <property type="entry name" value="Zn-binding ribosomal proteins"/>
    <property type="match status" value="1"/>
</dbReference>
<keyword id="KW-1185">Reference proteome</keyword>
<keyword id="KW-0687">Ribonucleoprotein</keyword>
<keyword id="KW-0689">Ribosomal protein</keyword>
<name>RL32_HERAR</name>
<sequence length="60" mass="6942">MAVQQNKKTPSKRGMHRSHDFLVAPQLSVEQTTGETHMRHHISPNGFYRGRKVLKTKNDE</sequence>
<protein>
    <recommendedName>
        <fullName evidence="1">Large ribosomal subunit protein bL32</fullName>
    </recommendedName>
    <alternativeName>
        <fullName evidence="3">50S ribosomal protein L32</fullName>
    </alternativeName>
</protein>
<gene>
    <name evidence="1" type="primary">rpmF</name>
    <name type="ordered locus">HEAR2079</name>
</gene>
<accession>A4G6T4</accession>
<proteinExistence type="inferred from homology"/>
<reference key="1">
    <citation type="journal article" date="2007" name="PLoS Genet.">
        <title>A tale of two oxidation states: bacterial colonization of arsenic-rich environments.</title>
        <authorList>
            <person name="Muller D."/>
            <person name="Medigue C."/>
            <person name="Koechler S."/>
            <person name="Barbe V."/>
            <person name="Barakat M."/>
            <person name="Talla E."/>
            <person name="Bonnefoy V."/>
            <person name="Krin E."/>
            <person name="Arsene-Ploetze F."/>
            <person name="Carapito C."/>
            <person name="Chandler M."/>
            <person name="Cournoyer B."/>
            <person name="Cruveiller S."/>
            <person name="Dossat C."/>
            <person name="Duval S."/>
            <person name="Heymann M."/>
            <person name="Leize E."/>
            <person name="Lieutaud A."/>
            <person name="Lievremont D."/>
            <person name="Makita Y."/>
            <person name="Mangenot S."/>
            <person name="Nitschke W."/>
            <person name="Ortet P."/>
            <person name="Perdrial N."/>
            <person name="Schoepp B."/>
            <person name="Siguier P."/>
            <person name="Simeonova D.D."/>
            <person name="Rouy Z."/>
            <person name="Segurens B."/>
            <person name="Turlin E."/>
            <person name="Vallenet D."/>
            <person name="van Dorsselaer A."/>
            <person name="Weiss S."/>
            <person name="Weissenbach J."/>
            <person name="Lett M.-C."/>
            <person name="Danchin A."/>
            <person name="Bertin P.N."/>
        </authorList>
    </citation>
    <scope>NUCLEOTIDE SEQUENCE [LARGE SCALE GENOMIC DNA]</scope>
    <source>
        <strain>ULPAs1</strain>
    </source>
</reference>